<accession>Q6D142</accession>
<feature type="chain" id="PRO_0000213052" description="Iron-sulfur cluster repair protein YtfE">
    <location>
        <begin position="1"/>
        <end position="221"/>
    </location>
</feature>
<organism>
    <name type="scientific">Pectobacterium atrosepticum (strain SCRI 1043 / ATCC BAA-672)</name>
    <name type="common">Erwinia carotovora subsp. atroseptica</name>
    <dbReference type="NCBI Taxonomy" id="218491"/>
    <lineage>
        <taxon>Bacteria</taxon>
        <taxon>Pseudomonadati</taxon>
        <taxon>Pseudomonadota</taxon>
        <taxon>Gammaproteobacteria</taxon>
        <taxon>Enterobacterales</taxon>
        <taxon>Pectobacteriaceae</taxon>
        <taxon>Pectobacterium</taxon>
    </lineage>
</organism>
<protein>
    <recommendedName>
        <fullName evidence="1">Iron-sulfur cluster repair protein YtfE</fullName>
    </recommendedName>
</protein>
<proteinExistence type="inferred from homology"/>
<evidence type="ECO:0000255" key="1">
    <source>
        <dbReference type="HAMAP-Rule" id="MF_01606"/>
    </source>
</evidence>
<comment type="function">
    <text evidence="1">Di-iron-containing protein involved in the repair of iron-sulfur clusters damaged by oxidative and nitrosative stress conditions.</text>
</comment>
<comment type="subunit">
    <text evidence="1">Homodimer.</text>
</comment>
<comment type="subcellular location">
    <subcellularLocation>
        <location evidence="1">Cytoplasm</location>
    </subcellularLocation>
</comment>
<comment type="similarity">
    <text evidence="1">Belongs to the RIC family. YtfE subfamily.</text>
</comment>
<keyword id="KW-0963">Cytoplasm</keyword>
<keyword id="KW-0408">Iron</keyword>
<keyword id="KW-0479">Metal-binding</keyword>
<keyword id="KW-1185">Reference proteome</keyword>
<keyword id="KW-0346">Stress response</keyword>
<name>YTFE_PECAS</name>
<gene>
    <name evidence="1" type="primary">ytfE</name>
    <name type="ordered locus">ECA3606</name>
</gene>
<sequence>MAYRDQSLGELAIAIPRATKLFRELNLDFCCGGKQTLSRAAGKKDLNIDELEAQLEKLAAQPSDARDWREAPLADIIAYIIPRFHDRHREQLPELILMAKKVERVHHDKADCPHGLANQLTAIYNELSQHMMKEERILFPMIGQGMGANAAAPISVMEHEHDDAGRDVEVVKELTNGVVPPEGACNTWRALYSGINEFITDLMEHIHLENNLLFPRALRGE</sequence>
<dbReference type="EMBL" id="BX950851">
    <property type="protein sequence ID" value="CAG76504.1"/>
    <property type="molecule type" value="Genomic_DNA"/>
</dbReference>
<dbReference type="RefSeq" id="WP_011095109.1">
    <property type="nucleotide sequence ID" value="NC_004547.2"/>
</dbReference>
<dbReference type="SMR" id="Q6D142"/>
<dbReference type="STRING" id="218491.ECA3606"/>
<dbReference type="DNASU" id="2883114"/>
<dbReference type="KEGG" id="eca:ECA3606"/>
<dbReference type="PATRIC" id="fig|218491.5.peg.3657"/>
<dbReference type="eggNOG" id="COG2846">
    <property type="taxonomic scope" value="Bacteria"/>
</dbReference>
<dbReference type="HOGENOM" id="CLU_076075_2_0_6"/>
<dbReference type="OrthoDB" id="9797132at2"/>
<dbReference type="Proteomes" id="UP000007966">
    <property type="component" value="Chromosome"/>
</dbReference>
<dbReference type="GO" id="GO:0005737">
    <property type="term" value="C:cytoplasm"/>
    <property type="evidence" value="ECO:0007669"/>
    <property type="project" value="UniProtKB-SubCell"/>
</dbReference>
<dbReference type="GO" id="GO:0046872">
    <property type="term" value="F:metal ion binding"/>
    <property type="evidence" value="ECO:0007669"/>
    <property type="project" value="UniProtKB-KW"/>
</dbReference>
<dbReference type="GO" id="GO:0030091">
    <property type="term" value="P:protein repair"/>
    <property type="evidence" value="ECO:0007669"/>
    <property type="project" value="UniProtKB-UniRule"/>
</dbReference>
<dbReference type="GO" id="GO:0051409">
    <property type="term" value="P:response to nitrosative stress"/>
    <property type="evidence" value="ECO:0007669"/>
    <property type="project" value="UniProtKB-UniRule"/>
</dbReference>
<dbReference type="GO" id="GO:0006979">
    <property type="term" value="P:response to oxidative stress"/>
    <property type="evidence" value="ECO:0007669"/>
    <property type="project" value="UniProtKB-UniRule"/>
</dbReference>
<dbReference type="Gene3D" id="1.20.120.520">
    <property type="entry name" value="nmb1532 protein domain like"/>
    <property type="match status" value="1"/>
</dbReference>
<dbReference type="HAMAP" id="MF_01606">
    <property type="entry name" value="RIC_YtfE"/>
    <property type="match status" value="1"/>
</dbReference>
<dbReference type="InterPro" id="IPR023742">
    <property type="entry name" value="FeS-repair_YftE"/>
</dbReference>
<dbReference type="InterPro" id="IPR012312">
    <property type="entry name" value="Hemerythrin-like"/>
</dbReference>
<dbReference type="InterPro" id="IPR019903">
    <property type="entry name" value="RIC_family"/>
</dbReference>
<dbReference type="NCBIfam" id="TIGR03652">
    <property type="entry name" value="FeS_repair_RIC"/>
    <property type="match status" value="1"/>
</dbReference>
<dbReference type="NCBIfam" id="NF008221">
    <property type="entry name" value="PRK10992.1"/>
    <property type="match status" value="1"/>
</dbReference>
<dbReference type="PANTHER" id="PTHR36438">
    <property type="entry name" value="IRON-SULFUR CLUSTER REPAIR PROTEIN YTFE"/>
    <property type="match status" value="1"/>
</dbReference>
<dbReference type="PANTHER" id="PTHR36438:SF1">
    <property type="entry name" value="IRON-SULFUR CLUSTER REPAIR PROTEIN YTFE"/>
    <property type="match status" value="1"/>
</dbReference>
<dbReference type="Pfam" id="PF01814">
    <property type="entry name" value="Hemerythrin"/>
    <property type="match status" value="1"/>
</dbReference>
<dbReference type="Pfam" id="PF04405">
    <property type="entry name" value="ScdA_N"/>
    <property type="match status" value="1"/>
</dbReference>
<reference key="1">
    <citation type="journal article" date="2004" name="Proc. Natl. Acad. Sci. U.S.A.">
        <title>Genome sequence of the enterobacterial phytopathogen Erwinia carotovora subsp. atroseptica and characterization of virulence factors.</title>
        <authorList>
            <person name="Bell K.S."/>
            <person name="Sebaihia M."/>
            <person name="Pritchard L."/>
            <person name="Holden M.T.G."/>
            <person name="Hyman L.J."/>
            <person name="Holeva M.C."/>
            <person name="Thomson N.R."/>
            <person name="Bentley S.D."/>
            <person name="Churcher L.J.C."/>
            <person name="Mungall K."/>
            <person name="Atkin R."/>
            <person name="Bason N."/>
            <person name="Brooks K."/>
            <person name="Chillingworth T."/>
            <person name="Clark K."/>
            <person name="Doggett J."/>
            <person name="Fraser A."/>
            <person name="Hance Z."/>
            <person name="Hauser H."/>
            <person name="Jagels K."/>
            <person name="Moule S."/>
            <person name="Norbertczak H."/>
            <person name="Ormond D."/>
            <person name="Price C."/>
            <person name="Quail M.A."/>
            <person name="Sanders M."/>
            <person name="Walker D."/>
            <person name="Whitehead S."/>
            <person name="Salmond G.P.C."/>
            <person name="Birch P.R.J."/>
            <person name="Parkhill J."/>
            <person name="Toth I.K."/>
        </authorList>
    </citation>
    <scope>NUCLEOTIDE SEQUENCE [LARGE SCALE GENOMIC DNA]</scope>
    <source>
        <strain>SCRI 1043 / ATCC BAA-672</strain>
    </source>
</reference>